<protein>
    <recommendedName>
        <fullName evidence="1">GTPase Obg</fullName>
        <ecNumber evidence="1">3.6.5.-</ecNumber>
    </recommendedName>
    <alternativeName>
        <fullName evidence="1">GTP-binding protein Obg</fullName>
    </alternativeName>
</protein>
<feature type="chain" id="PRO_0000385771" description="GTPase Obg">
    <location>
        <begin position="1"/>
        <end position="341"/>
    </location>
</feature>
<feature type="domain" description="Obg" evidence="2">
    <location>
        <begin position="1"/>
        <end position="159"/>
    </location>
</feature>
<feature type="domain" description="OBG-type G" evidence="1">
    <location>
        <begin position="160"/>
        <end position="327"/>
    </location>
</feature>
<feature type="binding site" evidence="1">
    <location>
        <begin position="166"/>
        <end position="173"/>
    </location>
    <ligand>
        <name>GTP</name>
        <dbReference type="ChEBI" id="CHEBI:37565"/>
    </ligand>
</feature>
<feature type="binding site" evidence="1">
    <location>
        <position position="173"/>
    </location>
    <ligand>
        <name>Mg(2+)</name>
        <dbReference type="ChEBI" id="CHEBI:18420"/>
    </ligand>
</feature>
<feature type="binding site" evidence="1">
    <location>
        <begin position="191"/>
        <end position="195"/>
    </location>
    <ligand>
        <name>GTP</name>
        <dbReference type="ChEBI" id="CHEBI:37565"/>
    </ligand>
</feature>
<feature type="binding site" evidence="1">
    <location>
        <position position="193"/>
    </location>
    <ligand>
        <name>Mg(2+)</name>
        <dbReference type="ChEBI" id="CHEBI:18420"/>
    </ligand>
</feature>
<feature type="binding site" evidence="1">
    <location>
        <begin position="212"/>
        <end position="215"/>
    </location>
    <ligand>
        <name>GTP</name>
        <dbReference type="ChEBI" id="CHEBI:37565"/>
    </ligand>
</feature>
<feature type="binding site" evidence="1">
    <location>
        <begin position="279"/>
        <end position="282"/>
    </location>
    <ligand>
        <name>GTP</name>
        <dbReference type="ChEBI" id="CHEBI:37565"/>
    </ligand>
</feature>
<feature type="binding site" evidence="1">
    <location>
        <begin position="308"/>
        <end position="310"/>
    </location>
    <ligand>
        <name>GTP</name>
        <dbReference type="ChEBI" id="CHEBI:37565"/>
    </ligand>
</feature>
<sequence>MKFLDQAKIYIRSGNGGAGAVSFRREKFLEFGGPDGGDGGRGGDVWVEAVDGLNTLIDYRYQQHFKAKTGMHGMGRNMTGGKGDDVVLRVPVGTQIFEEDNETLICDITEVGQRYRLAKGGNGGFGNLHFTTSTNRAPRRANPGQEGIERTIWLRLKLIADAGLVGLPNAGKSTFLASVTAAKPKIADYPFTTLHPNLGVARIDGREFVIADIPGLIEGASEGVGLGDRFLGHVERTRVLLHLVSAQEEDVAKAYQVIRGELEAYEHGLADKPEIVALSQVDTLDPETRKAKVKALKKACGCEPLLLSAVSHEGLNDTLRQLARIIDLSRAEEAGTAQAEE</sequence>
<organism>
    <name type="scientific">Brucella suis biovar 1 (strain 1330)</name>
    <dbReference type="NCBI Taxonomy" id="204722"/>
    <lineage>
        <taxon>Bacteria</taxon>
        <taxon>Pseudomonadati</taxon>
        <taxon>Pseudomonadota</taxon>
        <taxon>Alphaproteobacteria</taxon>
        <taxon>Hyphomicrobiales</taxon>
        <taxon>Brucellaceae</taxon>
        <taxon>Brucella/Ochrobactrum group</taxon>
        <taxon>Brucella</taxon>
    </lineage>
</organism>
<evidence type="ECO:0000255" key="1">
    <source>
        <dbReference type="HAMAP-Rule" id="MF_01454"/>
    </source>
</evidence>
<evidence type="ECO:0000255" key="2">
    <source>
        <dbReference type="PROSITE-ProRule" id="PRU01231"/>
    </source>
</evidence>
<gene>
    <name evidence="1" type="primary">obg</name>
    <name type="synonym">obgE</name>
    <name type="ordered locus">BR1845</name>
    <name type="ordered locus">BS1330_I1839</name>
</gene>
<keyword id="KW-0963">Cytoplasm</keyword>
<keyword id="KW-0342">GTP-binding</keyword>
<keyword id="KW-0378">Hydrolase</keyword>
<keyword id="KW-0460">Magnesium</keyword>
<keyword id="KW-0479">Metal-binding</keyword>
<keyword id="KW-0547">Nucleotide-binding</keyword>
<proteinExistence type="inferred from homology"/>
<reference key="1">
    <citation type="journal article" date="2002" name="Proc. Natl. Acad. Sci. U.S.A.">
        <title>The Brucella suis genome reveals fundamental similarities between animal and plant pathogens and symbionts.</title>
        <authorList>
            <person name="Paulsen I.T."/>
            <person name="Seshadri R."/>
            <person name="Nelson K.E."/>
            <person name="Eisen J.A."/>
            <person name="Heidelberg J.F."/>
            <person name="Read T.D."/>
            <person name="Dodson R.J."/>
            <person name="Umayam L.A."/>
            <person name="Brinkac L.M."/>
            <person name="Beanan M.J."/>
            <person name="Daugherty S.C."/>
            <person name="DeBoy R.T."/>
            <person name="Durkin A.S."/>
            <person name="Kolonay J.F."/>
            <person name="Madupu R."/>
            <person name="Nelson W.C."/>
            <person name="Ayodeji B."/>
            <person name="Kraul M."/>
            <person name="Shetty J."/>
            <person name="Malek J.A."/>
            <person name="Van Aken S.E."/>
            <person name="Riedmuller S."/>
            <person name="Tettelin H."/>
            <person name="Gill S.R."/>
            <person name="White O."/>
            <person name="Salzberg S.L."/>
            <person name="Hoover D.L."/>
            <person name="Lindler L.E."/>
            <person name="Halling S.M."/>
            <person name="Boyle S.M."/>
            <person name="Fraser C.M."/>
        </authorList>
    </citation>
    <scope>NUCLEOTIDE SEQUENCE [LARGE SCALE GENOMIC DNA]</scope>
    <source>
        <strain>1330</strain>
    </source>
</reference>
<reference key="2">
    <citation type="journal article" date="2011" name="J. Bacteriol.">
        <title>Revised genome sequence of Brucella suis 1330.</title>
        <authorList>
            <person name="Tae H."/>
            <person name="Shallom S."/>
            <person name="Settlage R."/>
            <person name="Preston D."/>
            <person name="Adams L.G."/>
            <person name="Garner H.R."/>
        </authorList>
    </citation>
    <scope>NUCLEOTIDE SEQUENCE [LARGE SCALE GENOMIC DNA]</scope>
    <source>
        <strain>1330</strain>
    </source>
</reference>
<comment type="function">
    <text evidence="1">An essential GTPase which binds GTP, GDP and possibly (p)ppGpp with moderate affinity, with high nucleotide exchange rates and a fairly low GTP hydrolysis rate. Plays a role in control of the cell cycle, stress response, ribosome biogenesis and in those bacteria that undergo differentiation, in morphogenesis control.</text>
</comment>
<comment type="cofactor">
    <cofactor evidence="1">
        <name>Mg(2+)</name>
        <dbReference type="ChEBI" id="CHEBI:18420"/>
    </cofactor>
</comment>
<comment type="subunit">
    <text evidence="1">Monomer.</text>
</comment>
<comment type="subcellular location">
    <subcellularLocation>
        <location evidence="1">Cytoplasm</location>
    </subcellularLocation>
</comment>
<comment type="similarity">
    <text evidence="1">Belongs to the TRAFAC class OBG-HflX-like GTPase superfamily. OBG GTPase family.</text>
</comment>
<accession>Q8FYM2</accession>
<accession>G0K7R1</accession>
<dbReference type="EC" id="3.6.5.-" evidence="1"/>
<dbReference type="EMBL" id="AE014291">
    <property type="protein sequence ID" value="AAN30740.1"/>
    <property type="molecule type" value="Genomic_DNA"/>
</dbReference>
<dbReference type="EMBL" id="CP002997">
    <property type="protein sequence ID" value="AEM19157.1"/>
    <property type="molecule type" value="Genomic_DNA"/>
</dbReference>
<dbReference type="RefSeq" id="WP_002964923.1">
    <property type="nucleotide sequence ID" value="NZ_KN046804.1"/>
</dbReference>
<dbReference type="SMR" id="Q8FYM2"/>
<dbReference type="GeneID" id="97533035"/>
<dbReference type="KEGG" id="bms:BR1845"/>
<dbReference type="KEGG" id="bsi:BS1330_I1839"/>
<dbReference type="PATRIC" id="fig|204722.21.peg.3451"/>
<dbReference type="HOGENOM" id="CLU_011747_2_0_5"/>
<dbReference type="PhylomeDB" id="Q8FYM2"/>
<dbReference type="Proteomes" id="UP000007104">
    <property type="component" value="Chromosome I"/>
</dbReference>
<dbReference type="GO" id="GO:0005737">
    <property type="term" value="C:cytoplasm"/>
    <property type="evidence" value="ECO:0007669"/>
    <property type="project" value="UniProtKB-SubCell"/>
</dbReference>
<dbReference type="GO" id="GO:0005525">
    <property type="term" value="F:GTP binding"/>
    <property type="evidence" value="ECO:0007669"/>
    <property type="project" value="UniProtKB-UniRule"/>
</dbReference>
<dbReference type="GO" id="GO:0003924">
    <property type="term" value="F:GTPase activity"/>
    <property type="evidence" value="ECO:0007669"/>
    <property type="project" value="UniProtKB-UniRule"/>
</dbReference>
<dbReference type="GO" id="GO:0000287">
    <property type="term" value="F:magnesium ion binding"/>
    <property type="evidence" value="ECO:0007669"/>
    <property type="project" value="InterPro"/>
</dbReference>
<dbReference type="GO" id="GO:0042254">
    <property type="term" value="P:ribosome biogenesis"/>
    <property type="evidence" value="ECO:0007669"/>
    <property type="project" value="UniProtKB-UniRule"/>
</dbReference>
<dbReference type="CDD" id="cd01898">
    <property type="entry name" value="Obg"/>
    <property type="match status" value="1"/>
</dbReference>
<dbReference type="FunFam" id="2.70.210.12:FF:000001">
    <property type="entry name" value="GTPase Obg"/>
    <property type="match status" value="1"/>
</dbReference>
<dbReference type="Gene3D" id="2.70.210.12">
    <property type="entry name" value="GTP1/OBG domain"/>
    <property type="match status" value="1"/>
</dbReference>
<dbReference type="Gene3D" id="3.40.50.300">
    <property type="entry name" value="P-loop containing nucleotide triphosphate hydrolases"/>
    <property type="match status" value="1"/>
</dbReference>
<dbReference type="HAMAP" id="MF_01454">
    <property type="entry name" value="GTPase_Obg"/>
    <property type="match status" value="1"/>
</dbReference>
<dbReference type="InterPro" id="IPR031167">
    <property type="entry name" value="G_OBG"/>
</dbReference>
<dbReference type="InterPro" id="IPR006073">
    <property type="entry name" value="GTP-bd"/>
</dbReference>
<dbReference type="InterPro" id="IPR014100">
    <property type="entry name" value="GTP-bd_Obg/CgtA"/>
</dbReference>
<dbReference type="InterPro" id="IPR006074">
    <property type="entry name" value="GTP1-OBG_CS"/>
</dbReference>
<dbReference type="InterPro" id="IPR006169">
    <property type="entry name" value="GTP1_OBG_dom"/>
</dbReference>
<dbReference type="InterPro" id="IPR036726">
    <property type="entry name" value="GTP1_OBG_dom_sf"/>
</dbReference>
<dbReference type="InterPro" id="IPR045086">
    <property type="entry name" value="OBG_GTPase"/>
</dbReference>
<dbReference type="InterPro" id="IPR027417">
    <property type="entry name" value="P-loop_NTPase"/>
</dbReference>
<dbReference type="NCBIfam" id="TIGR02729">
    <property type="entry name" value="Obg_CgtA"/>
    <property type="match status" value="1"/>
</dbReference>
<dbReference type="NCBIfam" id="NF008955">
    <property type="entry name" value="PRK12297.1"/>
    <property type="match status" value="1"/>
</dbReference>
<dbReference type="NCBIfam" id="NF008956">
    <property type="entry name" value="PRK12299.1"/>
    <property type="match status" value="1"/>
</dbReference>
<dbReference type="PANTHER" id="PTHR11702">
    <property type="entry name" value="DEVELOPMENTALLY REGULATED GTP-BINDING PROTEIN-RELATED"/>
    <property type="match status" value="1"/>
</dbReference>
<dbReference type="PANTHER" id="PTHR11702:SF31">
    <property type="entry name" value="MITOCHONDRIAL RIBOSOME-ASSOCIATED GTPASE 2"/>
    <property type="match status" value="1"/>
</dbReference>
<dbReference type="Pfam" id="PF01018">
    <property type="entry name" value="GTP1_OBG"/>
    <property type="match status" value="1"/>
</dbReference>
<dbReference type="Pfam" id="PF01926">
    <property type="entry name" value="MMR_HSR1"/>
    <property type="match status" value="1"/>
</dbReference>
<dbReference type="PIRSF" id="PIRSF002401">
    <property type="entry name" value="GTP_bd_Obg/CgtA"/>
    <property type="match status" value="1"/>
</dbReference>
<dbReference type="PRINTS" id="PR00326">
    <property type="entry name" value="GTP1OBG"/>
</dbReference>
<dbReference type="SUPFAM" id="SSF82051">
    <property type="entry name" value="Obg GTP-binding protein N-terminal domain"/>
    <property type="match status" value="1"/>
</dbReference>
<dbReference type="SUPFAM" id="SSF52540">
    <property type="entry name" value="P-loop containing nucleoside triphosphate hydrolases"/>
    <property type="match status" value="1"/>
</dbReference>
<dbReference type="PROSITE" id="PS51710">
    <property type="entry name" value="G_OBG"/>
    <property type="match status" value="1"/>
</dbReference>
<dbReference type="PROSITE" id="PS00905">
    <property type="entry name" value="GTP1_OBG"/>
    <property type="match status" value="1"/>
</dbReference>
<dbReference type="PROSITE" id="PS51883">
    <property type="entry name" value="OBG"/>
    <property type="match status" value="1"/>
</dbReference>
<name>OBG_BRUSU</name>